<proteinExistence type="inferred from homology"/>
<comment type="function">
    <text evidence="1">Participates in electron transfer between P700 and the cytochrome b6-f complex in photosystem I.</text>
</comment>
<comment type="cofactor">
    <cofactor evidence="1">
        <name>Cu(2+)</name>
        <dbReference type="ChEBI" id="CHEBI:29036"/>
    </cofactor>
</comment>
<comment type="subcellular location">
    <subcellularLocation>
        <location evidence="1">Cellular thylakoid membrane</location>
        <topology evidence="1">Peripheral membrane protein</topology>
        <orientation evidence="1">Lumenal side</orientation>
    </subcellularLocation>
    <text>Loosely bound to the thylakoid inner membrane surface.</text>
</comment>
<comment type="similarity">
    <text evidence="1">Belongs to the plastocyanin family.</text>
</comment>
<accession>B2IVD7</accession>
<sequence length="139" mass="14923">MKLISASLRRFSLAVLTILLVVSSFAVFTPSASAETYQVKLGTDKGLLAFEPKKLTIKPGDTIEWVNNKVPPHNVVFDPAKNPSKNADLAKSLSHKKLLMSAGQKETTTFAADAPAGDYTFYCEPHRGAGMVGTITVQG</sequence>
<evidence type="ECO:0000255" key="1">
    <source>
        <dbReference type="HAMAP-Rule" id="MF_00566"/>
    </source>
</evidence>
<gene>
    <name evidence="1" type="primary">petE</name>
    <name type="ordered locus">Npun_R2789</name>
</gene>
<name>PLAS_NOSP7</name>
<protein>
    <recommendedName>
        <fullName evidence="1">Plastocyanin</fullName>
    </recommendedName>
</protein>
<dbReference type="EMBL" id="CP001037">
    <property type="protein sequence ID" value="ACC81322.1"/>
    <property type="molecule type" value="Genomic_DNA"/>
</dbReference>
<dbReference type="RefSeq" id="WP_012409315.1">
    <property type="nucleotide sequence ID" value="NC_010628.1"/>
</dbReference>
<dbReference type="SMR" id="B2IVD7"/>
<dbReference type="STRING" id="63737.Npun_R2789"/>
<dbReference type="EnsemblBacteria" id="ACC81322">
    <property type="protein sequence ID" value="ACC81322"/>
    <property type="gene ID" value="Npun_R2789"/>
</dbReference>
<dbReference type="KEGG" id="npu:Npun_R2789"/>
<dbReference type="eggNOG" id="COG3794">
    <property type="taxonomic scope" value="Bacteria"/>
</dbReference>
<dbReference type="HOGENOM" id="CLU_084115_0_1_3"/>
<dbReference type="OrthoDB" id="680163at2"/>
<dbReference type="PhylomeDB" id="B2IVD7"/>
<dbReference type="Proteomes" id="UP000001191">
    <property type="component" value="Chromosome"/>
</dbReference>
<dbReference type="GO" id="GO:0031676">
    <property type="term" value="C:plasma membrane-derived thylakoid membrane"/>
    <property type="evidence" value="ECO:0007669"/>
    <property type="project" value="UniProtKB-SubCell"/>
</dbReference>
<dbReference type="GO" id="GO:0005507">
    <property type="term" value="F:copper ion binding"/>
    <property type="evidence" value="ECO:0007669"/>
    <property type="project" value="UniProtKB-UniRule"/>
</dbReference>
<dbReference type="GO" id="GO:0009055">
    <property type="term" value="F:electron transfer activity"/>
    <property type="evidence" value="ECO:0007669"/>
    <property type="project" value="UniProtKB-UniRule"/>
</dbReference>
<dbReference type="CDD" id="cd04219">
    <property type="entry name" value="Plastocyanin"/>
    <property type="match status" value="1"/>
</dbReference>
<dbReference type="Gene3D" id="2.60.40.420">
    <property type="entry name" value="Cupredoxins - blue copper proteins"/>
    <property type="match status" value="1"/>
</dbReference>
<dbReference type="HAMAP" id="MF_00566">
    <property type="entry name" value="Cytb6_f_plastocyanin"/>
    <property type="match status" value="1"/>
</dbReference>
<dbReference type="InterPro" id="IPR000923">
    <property type="entry name" value="BlueCu_1"/>
</dbReference>
<dbReference type="InterPro" id="IPR028871">
    <property type="entry name" value="BlueCu_1_BS"/>
</dbReference>
<dbReference type="InterPro" id="IPR001235">
    <property type="entry name" value="Copper_blue_Plastocyanin"/>
</dbReference>
<dbReference type="InterPro" id="IPR008972">
    <property type="entry name" value="Cupredoxin"/>
</dbReference>
<dbReference type="InterPro" id="IPR002387">
    <property type="entry name" value="Plastocyanin"/>
</dbReference>
<dbReference type="InterPro" id="IPR023511">
    <property type="entry name" value="Plastocyanin_cyanobac"/>
</dbReference>
<dbReference type="NCBIfam" id="TIGR02656">
    <property type="entry name" value="cyanin_plasto"/>
    <property type="match status" value="1"/>
</dbReference>
<dbReference type="PANTHER" id="PTHR34192">
    <property type="entry name" value="PLASTOCYANIN MAJOR ISOFORM, CHLOROPLASTIC-RELATED"/>
    <property type="match status" value="1"/>
</dbReference>
<dbReference type="PANTHER" id="PTHR34192:SF10">
    <property type="entry name" value="PLASTOCYANIN MAJOR ISOFORM, CHLOROPLASTIC-RELATED"/>
    <property type="match status" value="1"/>
</dbReference>
<dbReference type="Pfam" id="PF00127">
    <property type="entry name" value="Copper-bind"/>
    <property type="match status" value="1"/>
</dbReference>
<dbReference type="PRINTS" id="PR00156">
    <property type="entry name" value="COPPERBLUE"/>
</dbReference>
<dbReference type="PRINTS" id="PR00157">
    <property type="entry name" value="PLASTOCYANIN"/>
</dbReference>
<dbReference type="SUPFAM" id="SSF49503">
    <property type="entry name" value="Cupredoxins"/>
    <property type="match status" value="1"/>
</dbReference>
<dbReference type="PROSITE" id="PS00196">
    <property type="entry name" value="COPPER_BLUE"/>
    <property type="match status" value="1"/>
</dbReference>
<feature type="signal peptide" evidence="1">
    <location>
        <begin position="1"/>
        <end position="34"/>
    </location>
</feature>
<feature type="chain" id="PRO_1000129406" description="Plastocyanin">
    <location>
        <begin position="35"/>
        <end position="139"/>
    </location>
</feature>
<feature type="domain" description="Plastocyanin-like" evidence="1">
    <location>
        <begin position="35"/>
        <end position="139"/>
    </location>
</feature>
<feature type="binding site" evidence="1">
    <location>
        <position position="73"/>
    </location>
    <ligand>
        <name>Cu cation</name>
        <dbReference type="ChEBI" id="CHEBI:23378"/>
    </ligand>
</feature>
<feature type="binding site" evidence="1">
    <location>
        <position position="123"/>
    </location>
    <ligand>
        <name>Cu cation</name>
        <dbReference type="ChEBI" id="CHEBI:23378"/>
    </ligand>
</feature>
<feature type="binding site" evidence="1">
    <location>
        <position position="126"/>
    </location>
    <ligand>
        <name>Cu cation</name>
        <dbReference type="ChEBI" id="CHEBI:23378"/>
    </ligand>
</feature>
<feature type="binding site" evidence="1">
    <location>
        <position position="131"/>
    </location>
    <ligand>
        <name>Cu cation</name>
        <dbReference type="ChEBI" id="CHEBI:23378"/>
    </ligand>
</feature>
<reference key="1">
    <citation type="journal article" date="2013" name="Plant Physiol.">
        <title>A Nostoc punctiforme Sugar Transporter Necessary to Establish a Cyanobacterium-Plant Symbiosis.</title>
        <authorList>
            <person name="Ekman M."/>
            <person name="Picossi S."/>
            <person name="Campbell E.L."/>
            <person name="Meeks J.C."/>
            <person name="Flores E."/>
        </authorList>
    </citation>
    <scope>NUCLEOTIDE SEQUENCE [LARGE SCALE GENOMIC DNA]</scope>
    <source>
        <strain>ATCC 29133 / PCC 73102</strain>
    </source>
</reference>
<keyword id="KW-0186">Copper</keyword>
<keyword id="KW-0249">Electron transport</keyword>
<keyword id="KW-0472">Membrane</keyword>
<keyword id="KW-0479">Metal-binding</keyword>
<keyword id="KW-1185">Reference proteome</keyword>
<keyword id="KW-0732">Signal</keyword>
<keyword id="KW-0793">Thylakoid</keyword>
<keyword id="KW-0813">Transport</keyword>
<organism>
    <name type="scientific">Nostoc punctiforme (strain ATCC 29133 / PCC 73102)</name>
    <dbReference type="NCBI Taxonomy" id="63737"/>
    <lineage>
        <taxon>Bacteria</taxon>
        <taxon>Bacillati</taxon>
        <taxon>Cyanobacteriota</taxon>
        <taxon>Cyanophyceae</taxon>
        <taxon>Nostocales</taxon>
        <taxon>Nostocaceae</taxon>
        <taxon>Nostoc</taxon>
    </lineage>
</organism>